<comment type="function">
    <text evidence="1">Catalyzes the reversible reaction in which hydroxymethyl group from 5,10-methylenetetrahydrofolate is transferred onto alpha-ketoisovalerate to form ketopantoate.</text>
</comment>
<comment type="catalytic activity">
    <reaction evidence="1">
        <text>3-methyl-2-oxobutanoate + (6R)-5,10-methylene-5,6,7,8-tetrahydrofolate + H2O = 2-dehydropantoate + (6S)-5,6,7,8-tetrahydrofolate</text>
        <dbReference type="Rhea" id="RHEA:11824"/>
        <dbReference type="ChEBI" id="CHEBI:11561"/>
        <dbReference type="ChEBI" id="CHEBI:11851"/>
        <dbReference type="ChEBI" id="CHEBI:15377"/>
        <dbReference type="ChEBI" id="CHEBI:15636"/>
        <dbReference type="ChEBI" id="CHEBI:57453"/>
        <dbReference type="EC" id="2.1.2.11"/>
    </reaction>
</comment>
<comment type="cofactor">
    <cofactor evidence="1">
        <name>Mg(2+)</name>
        <dbReference type="ChEBI" id="CHEBI:18420"/>
    </cofactor>
    <text evidence="1">Binds 1 Mg(2+) ion per subunit.</text>
</comment>
<comment type="pathway">
    <text evidence="1">Cofactor biosynthesis; (R)-pantothenate biosynthesis; (R)-pantoate from 3-methyl-2-oxobutanoate: step 1/2.</text>
</comment>
<comment type="subunit">
    <text evidence="1">Homodecamer; pentamer of dimers.</text>
</comment>
<comment type="subcellular location">
    <subcellularLocation>
        <location evidence="1">Cytoplasm</location>
    </subcellularLocation>
</comment>
<comment type="similarity">
    <text evidence="1">Belongs to the PanB family.</text>
</comment>
<name>PANB_PROMP</name>
<feature type="chain" id="PRO_0000297330" description="3-methyl-2-oxobutanoate hydroxymethyltransferase">
    <location>
        <begin position="1"/>
        <end position="257"/>
    </location>
</feature>
<feature type="active site" description="Proton acceptor" evidence="1">
    <location>
        <position position="185"/>
    </location>
</feature>
<feature type="binding site" evidence="1">
    <location>
        <begin position="42"/>
        <end position="43"/>
    </location>
    <ligand>
        <name>3-methyl-2-oxobutanoate</name>
        <dbReference type="ChEBI" id="CHEBI:11851"/>
    </ligand>
</feature>
<feature type="binding site" evidence="1">
    <location>
        <position position="42"/>
    </location>
    <ligand>
        <name>Mg(2+)</name>
        <dbReference type="ChEBI" id="CHEBI:18420"/>
    </ligand>
</feature>
<feature type="binding site" evidence="1">
    <location>
        <position position="86"/>
    </location>
    <ligand>
        <name>3-methyl-2-oxobutanoate</name>
        <dbReference type="ChEBI" id="CHEBI:11851"/>
    </ligand>
</feature>
<feature type="binding site" evidence="1">
    <location>
        <position position="86"/>
    </location>
    <ligand>
        <name>Mg(2+)</name>
        <dbReference type="ChEBI" id="CHEBI:18420"/>
    </ligand>
</feature>
<feature type="binding site" evidence="1">
    <location>
        <position position="116"/>
    </location>
    <ligand>
        <name>3-methyl-2-oxobutanoate</name>
        <dbReference type="ChEBI" id="CHEBI:11851"/>
    </ligand>
</feature>
<feature type="binding site" evidence="1">
    <location>
        <position position="118"/>
    </location>
    <ligand>
        <name>Mg(2+)</name>
        <dbReference type="ChEBI" id="CHEBI:18420"/>
    </ligand>
</feature>
<dbReference type="EC" id="2.1.2.11" evidence="1"/>
<dbReference type="EMBL" id="BX548174">
    <property type="protein sequence ID" value="CAE19769.1"/>
    <property type="molecule type" value="Genomic_DNA"/>
</dbReference>
<dbReference type="RefSeq" id="WP_011132944.1">
    <property type="nucleotide sequence ID" value="NC_005072.1"/>
</dbReference>
<dbReference type="SMR" id="Q7TU60"/>
<dbReference type="STRING" id="59919.PMM1310"/>
<dbReference type="KEGG" id="pmm:PMM1310"/>
<dbReference type="eggNOG" id="COG0413">
    <property type="taxonomic scope" value="Bacteria"/>
</dbReference>
<dbReference type="HOGENOM" id="CLU_036645_1_0_3"/>
<dbReference type="OrthoDB" id="9781789at2"/>
<dbReference type="UniPathway" id="UPA00028">
    <property type="reaction ID" value="UER00003"/>
</dbReference>
<dbReference type="Proteomes" id="UP000001026">
    <property type="component" value="Chromosome"/>
</dbReference>
<dbReference type="GO" id="GO:0005737">
    <property type="term" value="C:cytoplasm"/>
    <property type="evidence" value="ECO:0007669"/>
    <property type="project" value="UniProtKB-SubCell"/>
</dbReference>
<dbReference type="GO" id="GO:0003864">
    <property type="term" value="F:3-methyl-2-oxobutanoate hydroxymethyltransferase activity"/>
    <property type="evidence" value="ECO:0007669"/>
    <property type="project" value="UniProtKB-UniRule"/>
</dbReference>
<dbReference type="GO" id="GO:0000287">
    <property type="term" value="F:magnesium ion binding"/>
    <property type="evidence" value="ECO:0007669"/>
    <property type="project" value="TreeGrafter"/>
</dbReference>
<dbReference type="GO" id="GO:0015940">
    <property type="term" value="P:pantothenate biosynthetic process"/>
    <property type="evidence" value="ECO:0007669"/>
    <property type="project" value="UniProtKB-UniRule"/>
</dbReference>
<dbReference type="CDD" id="cd06557">
    <property type="entry name" value="KPHMT-like"/>
    <property type="match status" value="1"/>
</dbReference>
<dbReference type="Gene3D" id="3.20.20.60">
    <property type="entry name" value="Phosphoenolpyruvate-binding domains"/>
    <property type="match status" value="1"/>
</dbReference>
<dbReference type="HAMAP" id="MF_00156">
    <property type="entry name" value="PanB"/>
    <property type="match status" value="1"/>
</dbReference>
<dbReference type="InterPro" id="IPR003700">
    <property type="entry name" value="Pantoate_hydroxy_MeTrfase"/>
</dbReference>
<dbReference type="InterPro" id="IPR015813">
    <property type="entry name" value="Pyrv/PenolPyrv_kinase-like_dom"/>
</dbReference>
<dbReference type="InterPro" id="IPR040442">
    <property type="entry name" value="Pyrv_kinase-like_dom_sf"/>
</dbReference>
<dbReference type="NCBIfam" id="TIGR00222">
    <property type="entry name" value="panB"/>
    <property type="match status" value="1"/>
</dbReference>
<dbReference type="NCBIfam" id="NF001452">
    <property type="entry name" value="PRK00311.1"/>
    <property type="match status" value="1"/>
</dbReference>
<dbReference type="PANTHER" id="PTHR20881">
    <property type="entry name" value="3-METHYL-2-OXOBUTANOATE HYDROXYMETHYLTRANSFERASE"/>
    <property type="match status" value="1"/>
</dbReference>
<dbReference type="PANTHER" id="PTHR20881:SF0">
    <property type="entry name" value="3-METHYL-2-OXOBUTANOATE HYDROXYMETHYLTRANSFERASE"/>
    <property type="match status" value="1"/>
</dbReference>
<dbReference type="Pfam" id="PF02548">
    <property type="entry name" value="Pantoate_transf"/>
    <property type="match status" value="1"/>
</dbReference>
<dbReference type="PIRSF" id="PIRSF000388">
    <property type="entry name" value="Pantoate_hydroxy_MeTrfase"/>
    <property type="match status" value="1"/>
</dbReference>
<dbReference type="SUPFAM" id="SSF51621">
    <property type="entry name" value="Phosphoenolpyruvate/pyruvate domain"/>
    <property type="match status" value="1"/>
</dbReference>
<proteinExistence type="inferred from homology"/>
<gene>
    <name evidence="1" type="primary">panB</name>
    <name type="ordered locus">PMM1310</name>
</gene>
<organism>
    <name type="scientific">Prochlorococcus marinus subsp. pastoris (strain CCMP1986 / NIES-2087 / MED4)</name>
    <dbReference type="NCBI Taxonomy" id="59919"/>
    <lineage>
        <taxon>Bacteria</taxon>
        <taxon>Bacillati</taxon>
        <taxon>Cyanobacteriota</taxon>
        <taxon>Cyanophyceae</taxon>
        <taxon>Synechococcales</taxon>
        <taxon>Prochlorococcaceae</taxon>
        <taxon>Prochlorococcus</taxon>
    </lineage>
</organism>
<reference key="1">
    <citation type="journal article" date="2003" name="Nature">
        <title>Genome divergence in two Prochlorococcus ecotypes reflects oceanic niche differentiation.</title>
        <authorList>
            <person name="Rocap G."/>
            <person name="Larimer F.W."/>
            <person name="Lamerdin J.E."/>
            <person name="Malfatti S."/>
            <person name="Chain P."/>
            <person name="Ahlgren N.A."/>
            <person name="Arellano A."/>
            <person name="Coleman M."/>
            <person name="Hauser L."/>
            <person name="Hess W.R."/>
            <person name="Johnson Z.I."/>
            <person name="Land M.L."/>
            <person name="Lindell D."/>
            <person name="Post A.F."/>
            <person name="Regala W."/>
            <person name="Shah M."/>
            <person name="Shaw S.L."/>
            <person name="Steglich C."/>
            <person name="Sullivan M.B."/>
            <person name="Ting C.S."/>
            <person name="Tolonen A."/>
            <person name="Webb E.A."/>
            <person name="Zinser E.R."/>
            <person name="Chisholm S.W."/>
        </authorList>
    </citation>
    <scope>NUCLEOTIDE SEQUENCE [LARGE SCALE GENOMIC DNA]</scope>
    <source>
        <strain>CCMP1986 / NIES-2087 / MED4</strain>
    </source>
</reference>
<accession>Q7TU60</accession>
<protein>
    <recommendedName>
        <fullName evidence="1">3-methyl-2-oxobutanoate hydroxymethyltransferase</fullName>
        <ecNumber evidence="1">2.1.2.11</ecNumber>
    </recommendedName>
    <alternativeName>
        <fullName evidence="1">Ketopantoate hydroxymethyltransferase</fullName>
        <shortName evidence="1">KPHMT</shortName>
    </alternativeName>
</protein>
<keyword id="KW-0963">Cytoplasm</keyword>
<keyword id="KW-0460">Magnesium</keyword>
<keyword id="KW-0479">Metal-binding</keyword>
<keyword id="KW-0566">Pantothenate biosynthesis</keyword>
<keyword id="KW-0808">Transferase</keyword>
<evidence type="ECO:0000255" key="1">
    <source>
        <dbReference type="HAMAP-Rule" id="MF_00156"/>
    </source>
</evidence>
<sequence>MLPSELVKYKKKSQKIIALTAWDSISGSLAEHSGADIVLVGDSLAMVCLGYKSTLPVTLENMIYHTNAVSRGFSKEIEEQSLLVCDMPFLTYQCGENKAVEYAGKIIKNTYAKAVKVEGADPEVQNVISRLIRMGIPVMGHLGLTPQSYLNLGFKQQGNNSESHEKIKRDALSLEKLGCFSIVLEHIPELLAKEIQTELEIPTIGIGAGKFCDGQVRVTADLLGLNDKQPPFCRPIIDGKKIFGEKLKEWVAAEKLN</sequence>